<reference key="1">
    <citation type="journal article" date="1997" name="Yeast">
        <title>Sequence analysis of a 10.5 kb DNA fragment from the yeast chromosome VII reveals the presence of three new open reading frames and of a tRNAThr gene.</title>
        <authorList>
            <person name="Mazzoni C."/>
            <person name="Ruzzi M."/>
            <person name="Rinaldi T."/>
            <person name="Solinas F."/>
            <person name="Montebove F."/>
            <person name="Frontali L."/>
        </authorList>
    </citation>
    <scope>NUCLEOTIDE SEQUENCE [GENOMIC DNA]</scope>
    <source>
        <strain>ATCC 204508 / S288c</strain>
    </source>
</reference>
<reference key="2">
    <citation type="journal article" date="1997" name="Nature">
        <title>The nucleotide sequence of Saccharomyces cerevisiae chromosome VII.</title>
        <authorList>
            <person name="Tettelin H."/>
            <person name="Agostoni-Carbone M.L."/>
            <person name="Albermann K."/>
            <person name="Albers M."/>
            <person name="Arroyo J."/>
            <person name="Backes U."/>
            <person name="Barreiros T."/>
            <person name="Bertani I."/>
            <person name="Bjourson A.J."/>
            <person name="Brueckner M."/>
            <person name="Bruschi C.V."/>
            <person name="Carignani G."/>
            <person name="Castagnoli L."/>
            <person name="Cerdan E."/>
            <person name="Clemente M.L."/>
            <person name="Coblenz A."/>
            <person name="Coglievina M."/>
            <person name="Coissac E."/>
            <person name="Defoor E."/>
            <person name="Del Bino S."/>
            <person name="Delius H."/>
            <person name="Delneri D."/>
            <person name="de Wergifosse P."/>
            <person name="Dujon B."/>
            <person name="Durand P."/>
            <person name="Entian K.-D."/>
            <person name="Eraso P."/>
            <person name="Escribano V."/>
            <person name="Fabiani L."/>
            <person name="Fartmann B."/>
            <person name="Feroli F."/>
            <person name="Feuermann M."/>
            <person name="Frontali L."/>
            <person name="Garcia-Gonzalez M."/>
            <person name="Garcia-Saez M.I."/>
            <person name="Goffeau A."/>
            <person name="Guerreiro P."/>
            <person name="Hani J."/>
            <person name="Hansen M."/>
            <person name="Hebling U."/>
            <person name="Hernandez K."/>
            <person name="Heumann K."/>
            <person name="Hilger F."/>
            <person name="Hofmann B."/>
            <person name="Indge K.J."/>
            <person name="James C.M."/>
            <person name="Klima R."/>
            <person name="Koetter P."/>
            <person name="Kramer B."/>
            <person name="Kramer W."/>
            <person name="Lauquin G."/>
            <person name="Leuther H."/>
            <person name="Louis E.J."/>
            <person name="Maillier E."/>
            <person name="Marconi A."/>
            <person name="Martegani E."/>
            <person name="Mazon M.J."/>
            <person name="Mazzoni C."/>
            <person name="McReynolds A.D.K."/>
            <person name="Melchioretto P."/>
            <person name="Mewes H.-W."/>
            <person name="Minenkova O."/>
            <person name="Mueller-Auer S."/>
            <person name="Nawrocki A."/>
            <person name="Netter P."/>
            <person name="Neu R."/>
            <person name="Nombela C."/>
            <person name="Oliver S.G."/>
            <person name="Panzeri L."/>
            <person name="Paoluzi S."/>
            <person name="Plevani P."/>
            <person name="Portetelle D."/>
            <person name="Portillo F."/>
            <person name="Potier S."/>
            <person name="Purnelle B."/>
            <person name="Rieger M."/>
            <person name="Riles L."/>
            <person name="Rinaldi T."/>
            <person name="Robben J."/>
            <person name="Rodrigues-Pousada C."/>
            <person name="Rodriguez-Belmonte E."/>
            <person name="Rodriguez-Torres A.M."/>
            <person name="Rose M."/>
            <person name="Ruzzi M."/>
            <person name="Saliola M."/>
            <person name="Sanchez-Perez M."/>
            <person name="Schaefer B."/>
            <person name="Schaefer M."/>
            <person name="Scharfe M."/>
            <person name="Schmidheini T."/>
            <person name="Schreer A."/>
            <person name="Skala J."/>
            <person name="Souciet J.-L."/>
            <person name="Steensma H.Y."/>
            <person name="Talla E."/>
            <person name="Thierry A."/>
            <person name="Vandenbol M."/>
            <person name="van der Aart Q.J.M."/>
            <person name="Van Dyck L."/>
            <person name="Vanoni M."/>
            <person name="Verhasselt P."/>
            <person name="Voet M."/>
            <person name="Volckaert G."/>
            <person name="Wambutt R."/>
            <person name="Watson M.D."/>
            <person name="Weber N."/>
            <person name="Wedler E."/>
            <person name="Wedler H."/>
            <person name="Wipfli P."/>
            <person name="Wolf K."/>
            <person name="Wright L.F."/>
            <person name="Zaccaria P."/>
            <person name="Zimmermann M."/>
            <person name="Zollner A."/>
            <person name="Kleine K."/>
        </authorList>
    </citation>
    <scope>NUCLEOTIDE SEQUENCE [LARGE SCALE GENOMIC DNA]</scope>
    <source>
        <strain>ATCC 204508 / S288c</strain>
    </source>
</reference>
<reference key="3">
    <citation type="journal article" date="2014" name="G3 (Bethesda)">
        <title>The reference genome sequence of Saccharomyces cerevisiae: Then and now.</title>
        <authorList>
            <person name="Engel S.R."/>
            <person name="Dietrich F.S."/>
            <person name="Fisk D.G."/>
            <person name="Binkley G."/>
            <person name="Balakrishnan R."/>
            <person name="Costanzo M.C."/>
            <person name="Dwight S.S."/>
            <person name="Hitz B.C."/>
            <person name="Karra K."/>
            <person name="Nash R.S."/>
            <person name="Weng S."/>
            <person name="Wong E.D."/>
            <person name="Lloyd P."/>
            <person name="Skrzypek M.S."/>
            <person name="Miyasato S.R."/>
            <person name="Simison M."/>
            <person name="Cherry J.M."/>
        </authorList>
    </citation>
    <scope>GENOME REANNOTATION</scope>
    <source>
        <strain>ATCC 204508 / S288c</strain>
    </source>
</reference>
<reference key="4">
    <citation type="journal article" date="2007" name="Genome Res.">
        <title>Approaching a complete repository of sequence-verified protein-encoding clones for Saccharomyces cerevisiae.</title>
        <authorList>
            <person name="Hu Y."/>
            <person name="Rolfs A."/>
            <person name="Bhullar B."/>
            <person name="Murthy T.V.S."/>
            <person name="Zhu C."/>
            <person name="Berger M.F."/>
            <person name="Camargo A.A."/>
            <person name="Kelley F."/>
            <person name="McCarron S."/>
            <person name="Jepson D."/>
            <person name="Richardson A."/>
            <person name="Raphael J."/>
            <person name="Moreira D."/>
            <person name="Taycher E."/>
            <person name="Zuo D."/>
            <person name="Mohr S."/>
            <person name="Kane M.F."/>
            <person name="Williamson J."/>
            <person name="Simpson A.J.G."/>
            <person name="Bulyk M.L."/>
            <person name="Harlow E."/>
            <person name="Marsischky G."/>
            <person name="Kolodner R.D."/>
            <person name="LaBaer J."/>
        </authorList>
    </citation>
    <scope>NUCLEOTIDE SEQUENCE [GENOMIC DNA]</scope>
    <source>
        <strain>ATCC 204508 / S288c</strain>
    </source>
</reference>
<reference key="5">
    <citation type="journal article" date="2003" name="Nature">
        <title>Global analysis of protein expression in yeast.</title>
        <authorList>
            <person name="Ghaemmaghami S."/>
            <person name="Huh W.-K."/>
            <person name="Bower K."/>
            <person name="Howson R.W."/>
            <person name="Belle A."/>
            <person name="Dephoure N."/>
            <person name="O'Shea E.K."/>
            <person name="Weissman J.S."/>
        </authorList>
    </citation>
    <scope>LEVEL OF PROTEIN EXPRESSION [LARGE SCALE ANALYSIS]</scope>
</reference>
<accession>P53319</accession>
<accession>D6VV36</accession>
<protein>
    <recommendedName>
        <fullName>6-phosphogluconate dehydrogenase, decarboxylating 2</fullName>
        <ecNumber>1.1.1.44</ecNumber>
    </recommendedName>
</protein>
<name>6PGD2_YEAST</name>
<proteinExistence type="evidence at protein level"/>
<feature type="chain" id="PRO_0000090076" description="6-phosphogluconate dehydrogenase, decarboxylating 2">
    <location>
        <begin position="1"/>
        <end position="492"/>
    </location>
</feature>
<feature type="active site" description="Proton acceptor" evidence="1">
    <location>
        <position position="185"/>
    </location>
</feature>
<feature type="active site" description="Proton donor" evidence="1">
    <location>
        <position position="192"/>
    </location>
</feature>
<feature type="binding site" evidence="1">
    <location>
        <begin position="12"/>
        <end position="17"/>
    </location>
    <ligand>
        <name>NADP(+)</name>
        <dbReference type="ChEBI" id="CHEBI:58349"/>
    </ligand>
</feature>
<feature type="binding site" evidence="1">
    <location>
        <begin position="35"/>
        <end position="37"/>
    </location>
    <ligand>
        <name>NADP(+)</name>
        <dbReference type="ChEBI" id="CHEBI:58349"/>
    </ligand>
</feature>
<feature type="binding site" evidence="1">
    <location>
        <begin position="77"/>
        <end position="79"/>
    </location>
    <ligand>
        <name>NADP(+)</name>
        <dbReference type="ChEBI" id="CHEBI:58349"/>
    </ligand>
</feature>
<feature type="binding site" evidence="1">
    <location>
        <position position="105"/>
    </location>
    <ligand>
        <name>NADP(+)</name>
        <dbReference type="ChEBI" id="CHEBI:58349"/>
    </ligand>
</feature>
<feature type="binding site" description="in other chain" evidence="1">
    <location>
        <position position="105"/>
    </location>
    <ligand>
        <name>substrate</name>
        <note>ligand shared between dimeric partners</note>
    </ligand>
</feature>
<feature type="binding site" description="in other chain" evidence="1">
    <location>
        <begin position="131"/>
        <end position="133"/>
    </location>
    <ligand>
        <name>substrate</name>
        <note>ligand shared between dimeric partners</note>
    </ligand>
</feature>
<feature type="binding site" description="in other chain" evidence="1">
    <location>
        <begin position="188"/>
        <end position="189"/>
    </location>
    <ligand>
        <name>substrate</name>
        <note>ligand shared between dimeric partners</note>
    </ligand>
</feature>
<feature type="binding site" description="in other chain" evidence="1">
    <location>
        <position position="193"/>
    </location>
    <ligand>
        <name>substrate</name>
        <note>ligand shared between dimeric partners</note>
    </ligand>
</feature>
<feature type="binding site" description="in other chain" evidence="1">
    <location>
        <position position="262"/>
    </location>
    <ligand>
        <name>substrate</name>
        <note>ligand shared between dimeric partners</note>
    </ligand>
</feature>
<feature type="binding site" description="in other chain" evidence="1">
    <location>
        <position position="289"/>
    </location>
    <ligand>
        <name>substrate</name>
        <note>ligand shared between dimeric partners</note>
    </ligand>
</feature>
<feature type="binding site" evidence="1">
    <location>
        <position position="449"/>
    </location>
    <ligand>
        <name>substrate</name>
        <note>ligand shared between dimeric partners</note>
    </ligand>
</feature>
<feature type="binding site" evidence="1">
    <location>
        <position position="455"/>
    </location>
    <ligand>
        <name>substrate</name>
        <note>ligand shared between dimeric partners</note>
    </ligand>
</feature>
<keyword id="KW-0311">Gluconate utilization</keyword>
<keyword id="KW-0521">NADP</keyword>
<keyword id="KW-0560">Oxidoreductase</keyword>
<keyword id="KW-0570">Pentose shunt</keyword>
<keyword id="KW-1185">Reference proteome</keyword>
<sequence>MSKAVGDLGLVGLAVMGQNLILNAADHGFTVVAYNRTQSKVDRFLANEAKGKSIIGATSIEDLVAKLKKPRKIMLLIKAGAPVDTLIKELVPHLDKGDIIIDGGNSHFPDTNRRYEELTKQGILFVGSGVSGGEDGARFGPSLMPGGSAEAWPHIKNIFQSIAAKSNGEPCCEWVGPAGSGHYVKMVHNGIEYGDMQLICEAYDIMKRIGRFTDKEISEVFDKWNTGVLDSFLIEITRDILKFDDVDGKPLVEKIMDTAGQKGTGKWTAINALDLGMPVTLIGEAVFARCLSAIKDERKRASKLLAGPTVPKDAIHDREQFVYDLEQALYASKIISYAQGFMLIREAARSYGWKLNNPAIALMWRGGCIIRSVFLAEITKAYRDDPDLENLLFNEFFASAVTKAQSGWRRTIALAATYGIPTPAFSTALAFYDGYRSERLPANLLQAQRDYFGAHTFRILPECASAHLPVDKDIHINWTGHGGNISSSTYQA</sequence>
<organism>
    <name type="scientific">Saccharomyces cerevisiae (strain ATCC 204508 / S288c)</name>
    <name type="common">Baker's yeast</name>
    <dbReference type="NCBI Taxonomy" id="559292"/>
    <lineage>
        <taxon>Eukaryota</taxon>
        <taxon>Fungi</taxon>
        <taxon>Dikarya</taxon>
        <taxon>Ascomycota</taxon>
        <taxon>Saccharomycotina</taxon>
        <taxon>Saccharomycetes</taxon>
        <taxon>Saccharomycetales</taxon>
        <taxon>Saccharomycetaceae</taxon>
        <taxon>Saccharomyces</taxon>
    </lineage>
</organism>
<gene>
    <name type="primary">GND2</name>
    <name type="ordered locus">YGR256W</name>
    <name type="ORF">G9170</name>
</gene>
<comment type="function">
    <text evidence="1">Catalyzes the oxidative decarboxylation of 6-phosphogluconate to ribulose 5-phosphate and CO(2), with concomitant reduction of NADP to NADPH.</text>
</comment>
<comment type="catalytic activity">
    <reaction>
        <text>6-phospho-D-gluconate + NADP(+) = D-ribulose 5-phosphate + CO2 + NADPH</text>
        <dbReference type="Rhea" id="RHEA:10116"/>
        <dbReference type="ChEBI" id="CHEBI:16526"/>
        <dbReference type="ChEBI" id="CHEBI:57783"/>
        <dbReference type="ChEBI" id="CHEBI:58121"/>
        <dbReference type="ChEBI" id="CHEBI:58349"/>
        <dbReference type="ChEBI" id="CHEBI:58759"/>
        <dbReference type="EC" id="1.1.1.44"/>
    </reaction>
</comment>
<comment type="pathway">
    <text>Carbohydrate degradation; pentose phosphate pathway; D-ribulose 5-phosphate from D-glucose 6-phosphate (oxidative stage): step 3/3.</text>
</comment>
<comment type="subunit">
    <text evidence="1">Homodimer.</text>
</comment>
<comment type="miscellaneous">
    <text evidence="2">Present with 556 molecules/cell in log phase SD medium.</text>
</comment>
<comment type="similarity">
    <text evidence="3">Belongs to the 6-phosphogluconate dehydrogenase family.</text>
</comment>
<evidence type="ECO:0000250" key="1"/>
<evidence type="ECO:0000269" key="2">
    <source>
    </source>
</evidence>
<evidence type="ECO:0000305" key="3"/>
<dbReference type="EC" id="1.1.1.44"/>
<dbReference type="EMBL" id="X99228">
    <property type="protein sequence ID" value="CAA67612.1"/>
    <property type="molecule type" value="Genomic_DNA"/>
</dbReference>
<dbReference type="EMBL" id="Z73041">
    <property type="protein sequence ID" value="CAA97285.1"/>
    <property type="molecule type" value="Genomic_DNA"/>
</dbReference>
<dbReference type="EMBL" id="AY692811">
    <property type="protein sequence ID" value="AAT92830.1"/>
    <property type="molecule type" value="Genomic_DNA"/>
</dbReference>
<dbReference type="EMBL" id="BK006941">
    <property type="protein sequence ID" value="DAA08347.1"/>
    <property type="molecule type" value="Genomic_DNA"/>
</dbReference>
<dbReference type="PIR" id="S64588">
    <property type="entry name" value="S64588"/>
</dbReference>
<dbReference type="RefSeq" id="NP_011772.3">
    <property type="nucleotide sequence ID" value="NM_001181385.3"/>
</dbReference>
<dbReference type="SMR" id="P53319"/>
<dbReference type="BioGRID" id="33508">
    <property type="interactions" value="79"/>
</dbReference>
<dbReference type="DIP" id="DIP-6605N"/>
<dbReference type="FunCoup" id="P53319">
    <property type="interactions" value="863"/>
</dbReference>
<dbReference type="IntAct" id="P53319">
    <property type="interactions" value="5"/>
</dbReference>
<dbReference type="MINT" id="P53319"/>
<dbReference type="STRING" id="4932.YGR256W"/>
<dbReference type="GlyGen" id="P53319">
    <property type="glycosylation" value="1 site"/>
</dbReference>
<dbReference type="iPTMnet" id="P53319"/>
<dbReference type="PaxDb" id="4932-YGR256W"/>
<dbReference type="PeptideAtlas" id="P53319"/>
<dbReference type="TopDownProteomics" id="P53319"/>
<dbReference type="EnsemblFungi" id="YGR256W_mRNA">
    <property type="protein sequence ID" value="YGR256W"/>
    <property type="gene ID" value="YGR256W"/>
</dbReference>
<dbReference type="GeneID" id="853172"/>
<dbReference type="KEGG" id="sce:YGR256W"/>
<dbReference type="AGR" id="SGD:S000003488"/>
<dbReference type="SGD" id="S000003488">
    <property type="gene designation" value="GND2"/>
</dbReference>
<dbReference type="VEuPathDB" id="FungiDB:YGR256W"/>
<dbReference type="eggNOG" id="KOG2653">
    <property type="taxonomic scope" value="Eukaryota"/>
</dbReference>
<dbReference type="GeneTree" id="ENSGT00390000009023"/>
<dbReference type="HOGENOM" id="CLU_024540_4_2_1"/>
<dbReference type="InParanoid" id="P53319"/>
<dbReference type="OMA" id="QALYMGK"/>
<dbReference type="OrthoDB" id="434986at2759"/>
<dbReference type="BioCyc" id="YEAST:YGR256W-MONOMER"/>
<dbReference type="BRENDA" id="1.1.1.44">
    <property type="organism ID" value="984"/>
</dbReference>
<dbReference type="UniPathway" id="UPA00115">
    <property type="reaction ID" value="UER00410"/>
</dbReference>
<dbReference type="BioGRID-ORCS" id="853172">
    <property type="hits" value="4 hits in 10 CRISPR screens"/>
</dbReference>
<dbReference type="PRO" id="PR:P53319"/>
<dbReference type="Proteomes" id="UP000002311">
    <property type="component" value="Chromosome VII"/>
</dbReference>
<dbReference type="RNAct" id="P53319">
    <property type="molecule type" value="protein"/>
</dbReference>
<dbReference type="GO" id="GO:0005829">
    <property type="term" value="C:cytosol"/>
    <property type="evidence" value="ECO:0000318"/>
    <property type="project" value="GO_Central"/>
</dbReference>
<dbReference type="GO" id="GO:0005886">
    <property type="term" value="C:plasma membrane"/>
    <property type="evidence" value="ECO:0007005"/>
    <property type="project" value="SGD"/>
</dbReference>
<dbReference type="GO" id="GO:0050661">
    <property type="term" value="F:NADP binding"/>
    <property type="evidence" value="ECO:0000318"/>
    <property type="project" value="GO_Central"/>
</dbReference>
<dbReference type="GO" id="GO:0004616">
    <property type="term" value="F:phosphogluconate dehydrogenase (decarboxylating) activity"/>
    <property type="evidence" value="ECO:0000315"/>
    <property type="project" value="SGD"/>
</dbReference>
<dbReference type="GO" id="GO:0019521">
    <property type="term" value="P:D-gluconate metabolic process"/>
    <property type="evidence" value="ECO:0007669"/>
    <property type="project" value="UniProtKB-KW"/>
</dbReference>
<dbReference type="GO" id="GO:0009051">
    <property type="term" value="P:pentose-phosphate shunt, oxidative branch"/>
    <property type="evidence" value="ECO:0000315"/>
    <property type="project" value="SGD"/>
</dbReference>
<dbReference type="FunFam" id="1.10.1040.10:FF:000002">
    <property type="entry name" value="6-phosphogluconate dehydrogenase, decarboxylating"/>
    <property type="match status" value="1"/>
</dbReference>
<dbReference type="FunFam" id="1.20.5.320:FF:000002">
    <property type="entry name" value="6-phosphogluconate dehydrogenase, decarboxylating"/>
    <property type="match status" value="1"/>
</dbReference>
<dbReference type="FunFam" id="3.40.50.720:FF:000007">
    <property type="entry name" value="6-phosphogluconate dehydrogenase, decarboxylating"/>
    <property type="match status" value="1"/>
</dbReference>
<dbReference type="Gene3D" id="1.20.5.320">
    <property type="entry name" value="6-Phosphogluconate Dehydrogenase, domain 3"/>
    <property type="match status" value="1"/>
</dbReference>
<dbReference type="Gene3D" id="1.10.1040.10">
    <property type="entry name" value="N-(1-d-carboxylethyl)-l-norvaline Dehydrogenase, domain 2"/>
    <property type="match status" value="1"/>
</dbReference>
<dbReference type="Gene3D" id="3.40.50.720">
    <property type="entry name" value="NAD(P)-binding Rossmann-like Domain"/>
    <property type="match status" value="1"/>
</dbReference>
<dbReference type="InterPro" id="IPR008927">
    <property type="entry name" value="6-PGluconate_DH-like_C_sf"/>
</dbReference>
<dbReference type="InterPro" id="IPR013328">
    <property type="entry name" value="6PGD_dom2"/>
</dbReference>
<dbReference type="InterPro" id="IPR006114">
    <property type="entry name" value="6PGDH_C"/>
</dbReference>
<dbReference type="InterPro" id="IPR006113">
    <property type="entry name" value="6PGDH_Gnd/GntZ"/>
</dbReference>
<dbReference type="InterPro" id="IPR006115">
    <property type="entry name" value="6PGDH_NADP-bd"/>
</dbReference>
<dbReference type="InterPro" id="IPR006184">
    <property type="entry name" value="6PGdom_BS"/>
</dbReference>
<dbReference type="InterPro" id="IPR036291">
    <property type="entry name" value="NAD(P)-bd_dom_sf"/>
</dbReference>
<dbReference type="InterPro" id="IPR006183">
    <property type="entry name" value="Pgluconate_DH"/>
</dbReference>
<dbReference type="NCBIfam" id="TIGR00873">
    <property type="entry name" value="gnd"/>
    <property type="match status" value="1"/>
</dbReference>
<dbReference type="NCBIfam" id="NF006765">
    <property type="entry name" value="PRK09287.1"/>
    <property type="match status" value="1"/>
</dbReference>
<dbReference type="PANTHER" id="PTHR11811">
    <property type="entry name" value="6-PHOSPHOGLUCONATE DEHYDROGENASE"/>
    <property type="match status" value="1"/>
</dbReference>
<dbReference type="Pfam" id="PF00393">
    <property type="entry name" value="6PGD"/>
    <property type="match status" value="1"/>
</dbReference>
<dbReference type="Pfam" id="PF03446">
    <property type="entry name" value="NAD_binding_2"/>
    <property type="match status" value="1"/>
</dbReference>
<dbReference type="PIRSF" id="PIRSF000109">
    <property type="entry name" value="6PGD"/>
    <property type="match status" value="1"/>
</dbReference>
<dbReference type="PRINTS" id="PR00076">
    <property type="entry name" value="6PGDHDRGNASE"/>
</dbReference>
<dbReference type="SMART" id="SM01350">
    <property type="entry name" value="6PGD"/>
    <property type="match status" value="1"/>
</dbReference>
<dbReference type="SUPFAM" id="SSF48179">
    <property type="entry name" value="6-phosphogluconate dehydrogenase C-terminal domain-like"/>
    <property type="match status" value="1"/>
</dbReference>
<dbReference type="SUPFAM" id="SSF51735">
    <property type="entry name" value="NAD(P)-binding Rossmann-fold domains"/>
    <property type="match status" value="1"/>
</dbReference>
<dbReference type="PROSITE" id="PS00461">
    <property type="entry name" value="6PGD"/>
    <property type="match status" value="1"/>
</dbReference>